<evidence type="ECO:0000255" key="1">
    <source>
        <dbReference type="HAMAP-Rule" id="MF_00110"/>
    </source>
</evidence>
<organism>
    <name type="scientific">Bacillus thuringiensis (strain Al Hakam)</name>
    <dbReference type="NCBI Taxonomy" id="412694"/>
    <lineage>
        <taxon>Bacteria</taxon>
        <taxon>Bacillati</taxon>
        <taxon>Bacillota</taxon>
        <taxon>Bacilli</taxon>
        <taxon>Bacillales</taxon>
        <taxon>Bacillaceae</taxon>
        <taxon>Bacillus</taxon>
        <taxon>Bacillus cereus group</taxon>
    </lineage>
</organism>
<dbReference type="EC" id="4.2.3.4" evidence="1"/>
<dbReference type="EMBL" id="CP000485">
    <property type="protein sequence ID" value="ABK84714.1"/>
    <property type="molecule type" value="Genomic_DNA"/>
</dbReference>
<dbReference type="RefSeq" id="WP_000526833.1">
    <property type="nucleotide sequence ID" value="NC_008600.1"/>
</dbReference>
<dbReference type="SMR" id="A0RBX1"/>
<dbReference type="KEGG" id="btl:BALH_1371"/>
<dbReference type="HOGENOM" id="CLU_001201_0_2_9"/>
<dbReference type="UniPathway" id="UPA00053">
    <property type="reaction ID" value="UER00085"/>
</dbReference>
<dbReference type="GO" id="GO:0005737">
    <property type="term" value="C:cytoplasm"/>
    <property type="evidence" value="ECO:0007669"/>
    <property type="project" value="UniProtKB-SubCell"/>
</dbReference>
<dbReference type="GO" id="GO:0003856">
    <property type="term" value="F:3-dehydroquinate synthase activity"/>
    <property type="evidence" value="ECO:0007669"/>
    <property type="project" value="UniProtKB-UniRule"/>
</dbReference>
<dbReference type="GO" id="GO:0046872">
    <property type="term" value="F:metal ion binding"/>
    <property type="evidence" value="ECO:0007669"/>
    <property type="project" value="UniProtKB-KW"/>
</dbReference>
<dbReference type="GO" id="GO:0000166">
    <property type="term" value="F:nucleotide binding"/>
    <property type="evidence" value="ECO:0007669"/>
    <property type="project" value="UniProtKB-KW"/>
</dbReference>
<dbReference type="GO" id="GO:0008652">
    <property type="term" value="P:amino acid biosynthetic process"/>
    <property type="evidence" value="ECO:0007669"/>
    <property type="project" value="UniProtKB-KW"/>
</dbReference>
<dbReference type="GO" id="GO:0009073">
    <property type="term" value="P:aromatic amino acid family biosynthetic process"/>
    <property type="evidence" value="ECO:0007669"/>
    <property type="project" value="UniProtKB-KW"/>
</dbReference>
<dbReference type="GO" id="GO:0009423">
    <property type="term" value="P:chorismate biosynthetic process"/>
    <property type="evidence" value="ECO:0007669"/>
    <property type="project" value="UniProtKB-UniRule"/>
</dbReference>
<dbReference type="CDD" id="cd08195">
    <property type="entry name" value="DHQS"/>
    <property type="match status" value="1"/>
</dbReference>
<dbReference type="FunFam" id="1.20.1090.10:FF:000008">
    <property type="entry name" value="3-dehydroquinate synthase"/>
    <property type="match status" value="1"/>
</dbReference>
<dbReference type="FunFam" id="3.40.50.1970:FF:000001">
    <property type="entry name" value="3-dehydroquinate synthase"/>
    <property type="match status" value="1"/>
</dbReference>
<dbReference type="Gene3D" id="3.40.50.1970">
    <property type="match status" value="1"/>
</dbReference>
<dbReference type="Gene3D" id="1.20.1090.10">
    <property type="entry name" value="Dehydroquinate synthase-like - alpha domain"/>
    <property type="match status" value="1"/>
</dbReference>
<dbReference type="HAMAP" id="MF_00110">
    <property type="entry name" value="DHQ_synthase"/>
    <property type="match status" value="1"/>
</dbReference>
<dbReference type="InterPro" id="IPR050071">
    <property type="entry name" value="Dehydroquinate_synthase"/>
</dbReference>
<dbReference type="InterPro" id="IPR016037">
    <property type="entry name" value="DHQ_synth_AroB"/>
</dbReference>
<dbReference type="InterPro" id="IPR030963">
    <property type="entry name" value="DHQ_synth_fam"/>
</dbReference>
<dbReference type="InterPro" id="IPR030960">
    <property type="entry name" value="DHQS/DOIS_N"/>
</dbReference>
<dbReference type="InterPro" id="IPR056179">
    <property type="entry name" value="DHQS_C"/>
</dbReference>
<dbReference type="NCBIfam" id="TIGR01357">
    <property type="entry name" value="aroB"/>
    <property type="match status" value="1"/>
</dbReference>
<dbReference type="PANTHER" id="PTHR43622">
    <property type="entry name" value="3-DEHYDROQUINATE SYNTHASE"/>
    <property type="match status" value="1"/>
</dbReference>
<dbReference type="PANTHER" id="PTHR43622:SF7">
    <property type="entry name" value="3-DEHYDROQUINATE SYNTHASE, CHLOROPLASTIC"/>
    <property type="match status" value="1"/>
</dbReference>
<dbReference type="Pfam" id="PF01761">
    <property type="entry name" value="DHQ_synthase"/>
    <property type="match status" value="1"/>
</dbReference>
<dbReference type="Pfam" id="PF24621">
    <property type="entry name" value="DHQS_C"/>
    <property type="match status" value="1"/>
</dbReference>
<dbReference type="PIRSF" id="PIRSF001455">
    <property type="entry name" value="DHQ_synth"/>
    <property type="match status" value="1"/>
</dbReference>
<dbReference type="SUPFAM" id="SSF56796">
    <property type="entry name" value="Dehydroquinate synthase-like"/>
    <property type="match status" value="1"/>
</dbReference>
<keyword id="KW-0028">Amino-acid biosynthesis</keyword>
<keyword id="KW-0057">Aromatic amino acid biosynthesis</keyword>
<keyword id="KW-0170">Cobalt</keyword>
<keyword id="KW-0963">Cytoplasm</keyword>
<keyword id="KW-0456">Lyase</keyword>
<keyword id="KW-0479">Metal-binding</keyword>
<keyword id="KW-0520">NAD</keyword>
<keyword id="KW-0547">Nucleotide-binding</keyword>
<keyword id="KW-0862">Zinc</keyword>
<gene>
    <name evidence="1" type="primary">aroB</name>
    <name type="ordered locus">BALH_1371</name>
</gene>
<feature type="chain" id="PRO_1000094456" description="3-dehydroquinate synthase">
    <location>
        <begin position="1"/>
        <end position="363"/>
    </location>
</feature>
<feature type="binding site" evidence="1">
    <location>
        <begin position="72"/>
        <end position="77"/>
    </location>
    <ligand>
        <name>NAD(+)</name>
        <dbReference type="ChEBI" id="CHEBI:57540"/>
    </ligand>
</feature>
<feature type="binding site" evidence="1">
    <location>
        <begin position="130"/>
        <end position="131"/>
    </location>
    <ligand>
        <name>NAD(+)</name>
        <dbReference type="ChEBI" id="CHEBI:57540"/>
    </ligand>
</feature>
<feature type="binding site" evidence="1">
    <location>
        <position position="142"/>
    </location>
    <ligand>
        <name>NAD(+)</name>
        <dbReference type="ChEBI" id="CHEBI:57540"/>
    </ligand>
</feature>
<feature type="binding site" evidence="1">
    <location>
        <position position="151"/>
    </location>
    <ligand>
        <name>NAD(+)</name>
        <dbReference type="ChEBI" id="CHEBI:57540"/>
    </ligand>
</feature>
<feature type="binding site" evidence="1">
    <location>
        <position position="184"/>
    </location>
    <ligand>
        <name>Zn(2+)</name>
        <dbReference type="ChEBI" id="CHEBI:29105"/>
    </ligand>
</feature>
<feature type="binding site" evidence="1">
    <location>
        <position position="247"/>
    </location>
    <ligand>
        <name>Zn(2+)</name>
        <dbReference type="ChEBI" id="CHEBI:29105"/>
    </ligand>
</feature>
<feature type="binding site" evidence="1">
    <location>
        <position position="264"/>
    </location>
    <ligand>
        <name>Zn(2+)</name>
        <dbReference type="ChEBI" id="CHEBI:29105"/>
    </ligand>
</feature>
<protein>
    <recommendedName>
        <fullName evidence="1">3-dehydroquinate synthase</fullName>
        <shortName evidence="1">DHQS</shortName>
        <ecNumber evidence="1">4.2.3.4</ecNumber>
    </recommendedName>
</protein>
<name>AROB_BACAH</name>
<proteinExistence type="inferred from homology"/>
<reference key="1">
    <citation type="journal article" date="2007" name="J. Bacteriol.">
        <title>The complete genome sequence of Bacillus thuringiensis Al Hakam.</title>
        <authorList>
            <person name="Challacombe J.F."/>
            <person name="Altherr M.R."/>
            <person name="Xie G."/>
            <person name="Bhotika S.S."/>
            <person name="Brown N."/>
            <person name="Bruce D."/>
            <person name="Campbell C.S."/>
            <person name="Campbell M.L."/>
            <person name="Chen J."/>
            <person name="Chertkov O."/>
            <person name="Cleland C."/>
            <person name="Dimitrijevic M."/>
            <person name="Doggett N.A."/>
            <person name="Fawcett J.J."/>
            <person name="Glavina T."/>
            <person name="Goodwin L.A."/>
            <person name="Green L.D."/>
            <person name="Han C.S."/>
            <person name="Hill K.K."/>
            <person name="Hitchcock P."/>
            <person name="Jackson P.J."/>
            <person name="Keim P."/>
            <person name="Kewalramani A.R."/>
            <person name="Longmire J."/>
            <person name="Lucas S."/>
            <person name="Malfatti S."/>
            <person name="Martinez D."/>
            <person name="McMurry K."/>
            <person name="Meincke L.J."/>
            <person name="Misra M."/>
            <person name="Moseman B.L."/>
            <person name="Mundt M."/>
            <person name="Munk A.C."/>
            <person name="Okinaka R.T."/>
            <person name="Parson-Quintana B."/>
            <person name="Reilly L.P."/>
            <person name="Richardson P."/>
            <person name="Robinson D.L."/>
            <person name="Saunders E."/>
            <person name="Tapia R."/>
            <person name="Tesmer J.G."/>
            <person name="Thayer N."/>
            <person name="Thompson L.S."/>
            <person name="Tice H."/>
            <person name="Ticknor L.O."/>
            <person name="Wills P.L."/>
            <person name="Gilna P."/>
            <person name="Brettin T.S."/>
        </authorList>
    </citation>
    <scope>NUCLEOTIDE SEQUENCE [LARGE SCALE GENOMIC DNA]</scope>
    <source>
        <strain>Al Hakam</strain>
    </source>
</reference>
<accession>A0RBX1</accession>
<comment type="function">
    <text evidence="1">Catalyzes the conversion of 3-deoxy-D-arabino-heptulosonate 7-phosphate (DAHP) to dehydroquinate (DHQ).</text>
</comment>
<comment type="catalytic activity">
    <reaction evidence="1">
        <text>7-phospho-2-dehydro-3-deoxy-D-arabino-heptonate = 3-dehydroquinate + phosphate</text>
        <dbReference type="Rhea" id="RHEA:21968"/>
        <dbReference type="ChEBI" id="CHEBI:32364"/>
        <dbReference type="ChEBI" id="CHEBI:43474"/>
        <dbReference type="ChEBI" id="CHEBI:58394"/>
        <dbReference type="EC" id="4.2.3.4"/>
    </reaction>
</comment>
<comment type="cofactor">
    <cofactor evidence="1">
        <name>Co(2+)</name>
        <dbReference type="ChEBI" id="CHEBI:48828"/>
    </cofactor>
    <cofactor evidence="1">
        <name>Zn(2+)</name>
        <dbReference type="ChEBI" id="CHEBI:29105"/>
    </cofactor>
    <text evidence="1">Binds 1 divalent metal cation per subunit. Can use either Co(2+) or Zn(2+).</text>
</comment>
<comment type="cofactor">
    <cofactor evidence="1">
        <name>NAD(+)</name>
        <dbReference type="ChEBI" id="CHEBI:57540"/>
    </cofactor>
</comment>
<comment type="pathway">
    <text evidence="1">Metabolic intermediate biosynthesis; chorismate biosynthesis; chorismate from D-erythrose 4-phosphate and phosphoenolpyruvate: step 2/7.</text>
</comment>
<comment type="subcellular location">
    <subcellularLocation>
        <location evidence="1">Cytoplasm</location>
    </subcellularLocation>
</comment>
<comment type="similarity">
    <text evidence="1">Belongs to the sugar phosphate cyclases superfamily. Dehydroquinate synthase family.</text>
</comment>
<sequence length="363" mass="40262">MGNIHIQTKSKEYDVYVGKESLSHLTTIVQNMQPSVSNIMIISDEAVASLHLQTVVDALQIDQKVFSFVVPSGEKEKSFENFYAAHTSALENKLDRNSLIVALGGGMIGDLAGFVAASFMRGIRFVQVPTTLLAHDSAVGGKVAINHPLGKNMIGAFHQPEAVVYHTPFLQSLPEKEWRSGYAEVIKHALIGDVKLYHWLKEEVQTLADLRDEKLIHILTKAIPVKANIVAQDETEKGVRAHLNFGHTLGHALEKELGYGNITHGDGVAVGMLFAIFLSEQVYKVNLAYEEMKQWFLKYGYPKMPSDLSVERLVGLMKQDKKANAGTIHMVLMQEYGVVNVVSIPDETVHIALEAFQKDMVEK</sequence>